<evidence type="ECO:0000255" key="1">
    <source>
        <dbReference type="HAMAP-Rule" id="MF_01007"/>
    </source>
</evidence>
<protein>
    <recommendedName>
        <fullName evidence="1">Ribosomal RNA small subunit methyltransferase H</fullName>
        <ecNumber evidence="1">2.1.1.199</ecNumber>
    </recommendedName>
    <alternativeName>
        <fullName evidence="1">16S rRNA m(4)C1402 methyltransferase</fullName>
    </alternativeName>
    <alternativeName>
        <fullName evidence="1">rRNA (cytosine-N(4)-)-methyltransferase RsmH</fullName>
    </alternativeName>
</protein>
<accession>B9JH59</accession>
<reference key="1">
    <citation type="journal article" date="2009" name="J. Bacteriol.">
        <title>Genome sequences of three Agrobacterium biovars help elucidate the evolution of multichromosome genomes in bacteria.</title>
        <authorList>
            <person name="Slater S.C."/>
            <person name="Goldman B.S."/>
            <person name="Goodner B."/>
            <person name="Setubal J.C."/>
            <person name="Farrand S.K."/>
            <person name="Nester E.W."/>
            <person name="Burr T.J."/>
            <person name="Banta L."/>
            <person name="Dickerman A.W."/>
            <person name="Paulsen I."/>
            <person name="Otten L."/>
            <person name="Suen G."/>
            <person name="Welch R."/>
            <person name="Almeida N.F."/>
            <person name="Arnold F."/>
            <person name="Burton O.T."/>
            <person name="Du Z."/>
            <person name="Ewing A."/>
            <person name="Godsy E."/>
            <person name="Heisel S."/>
            <person name="Houmiel K.L."/>
            <person name="Jhaveri J."/>
            <person name="Lu J."/>
            <person name="Miller N.M."/>
            <person name="Norton S."/>
            <person name="Chen Q."/>
            <person name="Phoolcharoen W."/>
            <person name="Ohlin V."/>
            <person name="Ondrusek D."/>
            <person name="Pride N."/>
            <person name="Stricklin S.L."/>
            <person name="Sun J."/>
            <person name="Wheeler C."/>
            <person name="Wilson L."/>
            <person name="Zhu H."/>
            <person name="Wood D.W."/>
        </authorList>
    </citation>
    <scope>NUCLEOTIDE SEQUENCE [LARGE SCALE GENOMIC DNA]</scope>
    <source>
        <strain>K84 / ATCC BAA-868</strain>
    </source>
</reference>
<organism>
    <name type="scientific">Rhizobium rhizogenes (strain K84 / ATCC BAA-868)</name>
    <name type="common">Agrobacterium radiobacter</name>
    <dbReference type="NCBI Taxonomy" id="311403"/>
    <lineage>
        <taxon>Bacteria</taxon>
        <taxon>Pseudomonadati</taxon>
        <taxon>Pseudomonadota</taxon>
        <taxon>Alphaproteobacteria</taxon>
        <taxon>Hyphomicrobiales</taxon>
        <taxon>Rhizobiaceae</taxon>
        <taxon>Rhizobium/Agrobacterium group</taxon>
        <taxon>Rhizobium</taxon>
    </lineage>
</organism>
<sequence>MVANSGGGLTDADGGPVRHIPVLLKEVLEALAPAPGKLILDGTFGAGGYTSAILAAGADMIALDRDPTAIAAGQSMVAAHAGRLTLIQSQFSQLADHAPQGGLDGVVLDIGVSSMQLDEAERGFSFSKNGPLDMRMSASGVSAADVVNHAKLADLIRIFVFLGEEKQAPRIAHAIEKRRAEAPFVTTRDLAGLIEIVTPRKAKDKIHPATRVFQALRIFVNDELGELAQALFAAERALKPGGRLVVVTFHSLEDRIVKKFFADRSGRAGGSRHMPMVHERLATFDPIGKPMISASDAEAEINPRARSAKLRAGLRTSVQAEAADLSIFDLPNLASLGKLGG</sequence>
<feature type="chain" id="PRO_0000386701" description="Ribosomal RNA small subunit methyltransferase H">
    <location>
        <begin position="1"/>
        <end position="341"/>
    </location>
</feature>
<feature type="binding site" evidence="1">
    <location>
        <begin position="47"/>
        <end position="49"/>
    </location>
    <ligand>
        <name>S-adenosyl-L-methionine</name>
        <dbReference type="ChEBI" id="CHEBI:59789"/>
    </ligand>
</feature>
<feature type="binding site" evidence="1">
    <location>
        <position position="64"/>
    </location>
    <ligand>
        <name>S-adenosyl-L-methionine</name>
        <dbReference type="ChEBI" id="CHEBI:59789"/>
    </ligand>
</feature>
<feature type="binding site" evidence="1">
    <location>
        <position position="91"/>
    </location>
    <ligand>
        <name>S-adenosyl-L-methionine</name>
        <dbReference type="ChEBI" id="CHEBI:59789"/>
    </ligand>
</feature>
<feature type="binding site" evidence="1">
    <location>
        <position position="109"/>
    </location>
    <ligand>
        <name>S-adenosyl-L-methionine</name>
        <dbReference type="ChEBI" id="CHEBI:59789"/>
    </ligand>
</feature>
<feature type="binding site" evidence="1">
    <location>
        <position position="116"/>
    </location>
    <ligand>
        <name>S-adenosyl-L-methionine</name>
        <dbReference type="ChEBI" id="CHEBI:59789"/>
    </ligand>
</feature>
<gene>
    <name evidence="1" type="primary">rsmH</name>
    <name type="synonym">mraW</name>
    <name type="ordered locus">Arad_3006</name>
</gene>
<keyword id="KW-0963">Cytoplasm</keyword>
<keyword id="KW-0489">Methyltransferase</keyword>
<keyword id="KW-0698">rRNA processing</keyword>
<keyword id="KW-0949">S-adenosyl-L-methionine</keyword>
<keyword id="KW-0808">Transferase</keyword>
<proteinExistence type="inferred from homology"/>
<name>RSMH_RHIR8</name>
<dbReference type="EC" id="2.1.1.199" evidence="1"/>
<dbReference type="EMBL" id="CP000628">
    <property type="protein sequence ID" value="ACM27057.1"/>
    <property type="molecule type" value="Genomic_DNA"/>
</dbReference>
<dbReference type="RefSeq" id="WP_012651823.1">
    <property type="nucleotide sequence ID" value="NC_011985.1"/>
</dbReference>
<dbReference type="SMR" id="B9JH59"/>
<dbReference type="STRING" id="311403.Arad_3006"/>
<dbReference type="GeneID" id="86848927"/>
<dbReference type="KEGG" id="ara:Arad_3006"/>
<dbReference type="eggNOG" id="COG0275">
    <property type="taxonomic scope" value="Bacteria"/>
</dbReference>
<dbReference type="HOGENOM" id="CLU_038422_1_1_5"/>
<dbReference type="Proteomes" id="UP000001600">
    <property type="component" value="Chromosome 1"/>
</dbReference>
<dbReference type="GO" id="GO:0005737">
    <property type="term" value="C:cytoplasm"/>
    <property type="evidence" value="ECO:0007669"/>
    <property type="project" value="UniProtKB-SubCell"/>
</dbReference>
<dbReference type="GO" id="GO:0071424">
    <property type="term" value="F:rRNA (cytosine-N4-)-methyltransferase activity"/>
    <property type="evidence" value="ECO:0007669"/>
    <property type="project" value="UniProtKB-UniRule"/>
</dbReference>
<dbReference type="GO" id="GO:0070475">
    <property type="term" value="P:rRNA base methylation"/>
    <property type="evidence" value="ECO:0007669"/>
    <property type="project" value="UniProtKB-UniRule"/>
</dbReference>
<dbReference type="Gene3D" id="1.10.150.170">
    <property type="entry name" value="Putative methyltransferase TM0872, insert domain"/>
    <property type="match status" value="1"/>
</dbReference>
<dbReference type="Gene3D" id="3.40.50.150">
    <property type="entry name" value="Vaccinia Virus protein VP39"/>
    <property type="match status" value="1"/>
</dbReference>
<dbReference type="HAMAP" id="MF_01007">
    <property type="entry name" value="16SrRNA_methyltr_H"/>
    <property type="match status" value="1"/>
</dbReference>
<dbReference type="InterPro" id="IPR002903">
    <property type="entry name" value="RsmH"/>
</dbReference>
<dbReference type="InterPro" id="IPR023397">
    <property type="entry name" value="SAM-dep_MeTrfase_MraW_recog"/>
</dbReference>
<dbReference type="InterPro" id="IPR029063">
    <property type="entry name" value="SAM-dependent_MTases_sf"/>
</dbReference>
<dbReference type="NCBIfam" id="TIGR00006">
    <property type="entry name" value="16S rRNA (cytosine(1402)-N(4))-methyltransferase RsmH"/>
    <property type="match status" value="1"/>
</dbReference>
<dbReference type="PANTHER" id="PTHR11265:SF0">
    <property type="entry name" value="12S RRNA N4-METHYLCYTIDINE METHYLTRANSFERASE"/>
    <property type="match status" value="1"/>
</dbReference>
<dbReference type="PANTHER" id="PTHR11265">
    <property type="entry name" value="S-ADENOSYL-METHYLTRANSFERASE MRAW"/>
    <property type="match status" value="1"/>
</dbReference>
<dbReference type="Pfam" id="PF01795">
    <property type="entry name" value="Methyltransf_5"/>
    <property type="match status" value="1"/>
</dbReference>
<dbReference type="PIRSF" id="PIRSF004486">
    <property type="entry name" value="MraW"/>
    <property type="match status" value="1"/>
</dbReference>
<dbReference type="SUPFAM" id="SSF81799">
    <property type="entry name" value="Putative methyltransferase TM0872, insert domain"/>
    <property type="match status" value="1"/>
</dbReference>
<dbReference type="SUPFAM" id="SSF53335">
    <property type="entry name" value="S-adenosyl-L-methionine-dependent methyltransferases"/>
    <property type="match status" value="1"/>
</dbReference>
<comment type="function">
    <text evidence="1">Specifically methylates the N4 position of cytidine in position 1402 (C1402) of 16S rRNA.</text>
</comment>
<comment type="catalytic activity">
    <reaction evidence="1">
        <text>cytidine(1402) in 16S rRNA + S-adenosyl-L-methionine = N(4)-methylcytidine(1402) in 16S rRNA + S-adenosyl-L-homocysteine + H(+)</text>
        <dbReference type="Rhea" id="RHEA:42928"/>
        <dbReference type="Rhea" id="RHEA-COMP:10286"/>
        <dbReference type="Rhea" id="RHEA-COMP:10287"/>
        <dbReference type="ChEBI" id="CHEBI:15378"/>
        <dbReference type="ChEBI" id="CHEBI:57856"/>
        <dbReference type="ChEBI" id="CHEBI:59789"/>
        <dbReference type="ChEBI" id="CHEBI:74506"/>
        <dbReference type="ChEBI" id="CHEBI:82748"/>
        <dbReference type="EC" id="2.1.1.199"/>
    </reaction>
</comment>
<comment type="subcellular location">
    <subcellularLocation>
        <location evidence="1">Cytoplasm</location>
    </subcellularLocation>
</comment>
<comment type="similarity">
    <text evidence="1">Belongs to the methyltransferase superfamily. RsmH family.</text>
</comment>